<sequence length="305" mass="34535">MYNGILPVYKERGLTSHDVVFKLRKILKTKKIGHTGTLDPEVAGVLPVCIGNATRVSDYVMDMGKAYEATVSIGRSTTTEDQTGDTLETKGVHSADFNKDDIDRLLESFKGIIEQIPPMYSSVKVNGKKLYEYARNNETVERPKRKVNIKDIGRISELDFKENECHFKIRVICGKGTYIRTLATDIGVKLGFPAHMSKLTRIESGGFVLKDSLTLEQIKELHEQDSLQNKLFPLEYGLKGLPSIKIKDSHIKKRILNGQKFNKNEFDNKIKDQIVFIDGDSEKVLAIYMVHPTKESEIKPKKVFN</sequence>
<organism>
    <name type="scientific">Staphylococcus aureus (strain MW2)</name>
    <dbReference type="NCBI Taxonomy" id="196620"/>
    <lineage>
        <taxon>Bacteria</taxon>
        <taxon>Bacillati</taxon>
        <taxon>Bacillota</taxon>
        <taxon>Bacilli</taxon>
        <taxon>Bacillales</taxon>
        <taxon>Staphylococcaceae</taxon>
        <taxon>Staphylococcus</taxon>
    </lineage>
</organism>
<keyword id="KW-0413">Isomerase</keyword>
<keyword id="KW-0819">tRNA processing</keyword>
<feature type="chain" id="PRO_0000121907" description="tRNA pseudouridine synthase B">
    <location>
        <begin position="1"/>
        <end position="305"/>
    </location>
</feature>
<feature type="active site" description="Nucleophile" evidence="1">
    <location>
        <position position="39"/>
    </location>
</feature>
<name>TRUB_STAAW</name>
<proteinExistence type="inferred from homology"/>
<evidence type="ECO:0000255" key="1">
    <source>
        <dbReference type="HAMAP-Rule" id="MF_01080"/>
    </source>
</evidence>
<gene>
    <name evidence="1" type="primary">truB</name>
    <name type="ordered locus">MW1154</name>
</gene>
<protein>
    <recommendedName>
        <fullName evidence="1">tRNA pseudouridine synthase B</fullName>
        <ecNumber evidence="1">5.4.99.25</ecNumber>
    </recommendedName>
    <alternativeName>
        <fullName evidence="1">tRNA pseudouridine(55) synthase</fullName>
        <shortName evidence="1">Psi55 synthase</shortName>
    </alternativeName>
    <alternativeName>
        <fullName evidence="1">tRNA pseudouridylate synthase</fullName>
    </alternativeName>
    <alternativeName>
        <fullName evidence="1">tRNA-uridine isomerase</fullName>
    </alternativeName>
</protein>
<dbReference type="EC" id="5.4.99.25" evidence="1"/>
<dbReference type="EMBL" id="BA000033">
    <property type="protein sequence ID" value="BAB95019.1"/>
    <property type="molecule type" value="Genomic_DNA"/>
</dbReference>
<dbReference type="RefSeq" id="WP_000282306.1">
    <property type="nucleotide sequence ID" value="NC_003923.1"/>
</dbReference>
<dbReference type="SMR" id="Q8NWZ0"/>
<dbReference type="KEGG" id="sam:MW1154"/>
<dbReference type="HOGENOM" id="CLU_032087_0_1_9"/>
<dbReference type="GO" id="GO:0003723">
    <property type="term" value="F:RNA binding"/>
    <property type="evidence" value="ECO:0007669"/>
    <property type="project" value="InterPro"/>
</dbReference>
<dbReference type="GO" id="GO:0160148">
    <property type="term" value="F:tRNA pseudouridine(55) synthase activity"/>
    <property type="evidence" value="ECO:0007669"/>
    <property type="project" value="UniProtKB-EC"/>
</dbReference>
<dbReference type="GO" id="GO:1990481">
    <property type="term" value="P:mRNA pseudouridine synthesis"/>
    <property type="evidence" value="ECO:0007669"/>
    <property type="project" value="TreeGrafter"/>
</dbReference>
<dbReference type="GO" id="GO:0031119">
    <property type="term" value="P:tRNA pseudouridine synthesis"/>
    <property type="evidence" value="ECO:0007669"/>
    <property type="project" value="UniProtKB-UniRule"/>
</dbReference>
<dbReference type="CDD" id="cd02573">
    <property type="entry name" value="PseudoU_synth_EcTruB"/>
    <property type="match status" value="1"/>
</dbReference>
<dbReference type="FunFam" id="3.30.2350.10:FF:000011">
    <property type="entry name" value="tRNA pseudouridine synthase B"/>
    <property type="match status" value="1"/>
</dbReference>
<dbReference type="Gene3D" id="3.30.2350.10">
    <property type="entry name" value="Pseudouridine synthase"/>
    <property type="match status" value="1"/>
</dbReference>
<dbReference type="HAMAP" id="MF_01080">
    <property type="entry name" value="TruB_bact"/>
    <property type="match status" value="1"/>
</dbReference>
<dbReference type="InterPro" id="IPR020103">
    <property type="entry name" value="PsdUridine_synth_cat_dom_sf"/>
</dbReference>
<dbReference type="InterPro" id="IPR002501">
    <property type="entry name" value="PsdUridine_synth_N"/>
</dbReference>
<dbReference type="InterPro" id="IPR014780">
    <property type="entry name" value="tRNA_psdUridine_synth_TruB"/>
</dbReference>
<dbReference type="InterPro" id="IPR032819">
    <property type="entry name" value="TruB_C"/>
</dbReference>
<dbReference type="NCBIfam" id="TIGR00431">
    <property type="entry name" value="TruB"/>
    <property type="match status" value="1"/>
</dbReference>
<dbReference type="PANTHER" id="PTHR13767:SF2">
    <property type="entry name" value="PSEUDOURIDYLATE SYNTHASE TRUB1"/>
    <property type="match status" value="1"/>
</dbReference>
<dbReference type="PANTHER" id="PTHR13767">
    <property type="entry name" value="TRNA-PSEUDOURIDINE SYNTHASE"/>
    <property type="match status" value="1"/>
</dbReference>
<dbReference type="Pfam" id="PF16198">
    <property type="entry name" value="TruB_C_2"/>
    <property type="match status" value="1"/>
</dbReference>
<dbReference type="Pfam" id="PF01509">
    <property type="entry name" value="TruB_N"/>
    <property type="match status" value="1"/>
</dbReference>
<dbReference type="SUPFAM" id="SSF55120">
    <property type="entry name" value="Pseudouridine synthase"/>
    <property type="match status" value="1"/>
</dbReference>
<reference key="1">
    <citation type="journal article" date="2002" name="Lancet">
        <title>Genome and virulence determinants of high virulence community-acquired MRSA.</title>
        <authorList>
            <person name="Baba T."/>
            <person name="Takeuchi F."/>
            <person name="Kuroda M."/>
            <person name="Yuzawa H."/>
            <person name="Aoki K."/>
            <person name="Oguchi A."/>
            <person name="Nagai Y."/>
            <person name="Iwama N."/>
            <person name="Asano K."/>
            <person name="Naimi T."/>
            <person name="Kuroda H."/>
            <person name="Cui L."/>
            <person name="Yamamoto K."/>
            <person name="Hiramatsu K."/>
        </authorList>
    </citation>
    <scope>NUCLEOTIDE SEQUENCE [LARGE SCALE GENOMIC DNA]</scope>
    <source>
        <strain>MW2</strain>
    </source>
</reference>
<comment type="function">
    <text evidence="1">Responsible for synthesis of pseudouridine from uracil-55 in the psi GC loop of transfer RNAs.</text>
</comment>
<comment type="catalytic activity">
    <reaction evidence="1">
        <text>uridine(55) in tRNA = pseudouridine(55) in tRNA</text>
        <dbReference type="Rhea" id="RHEA:42532"/>
        <dbReference type="Rhea" id="RHEA-COMP:10101"/>
        <dbReference type="Rhea" id="RHEA-COMP:10102"/>
        <dbReference type="ChEBI" id="CHEBI:65314"/>
        <dbReference type="ChEBI" id="CHEBI:65315"/>
        <dbReference type="EC" id="5.4.99.25"/>
    </reaction>
</comment>
<comment type="similarity">
    <text evidence="1">Belongs to the pseudouridine synthase TruB family. Type 1 subfamily.</text>
</comment>
<accession>Q8NWZ0</accession>